<dbReference type="EC" id="2.6.1.81" evidence="1"/>
<dbReference type="EMBL" id="BX571869">
    <property type="protein sequence ID" value="CAE15484.1"/>
    <property type="molecule type" value="Genomic_DNA"/>
</dbReference>
<dbReference type="RefSeq" id="WP_011147326.1">
    <property type="nucleotide sequence ID" value="NC_005126.1"/>
</dbReference>
<dbReference type="SMR" id="Q7N2G7"/>
<dbReference type="STRING" id="243265.plu3110"/>
<dbReference type="GeneID" id="48849372"/>
<dbReference type="KEGG" id="plu:plu3110"/>
<dbReference type="eggNOG" id="COG4992">
    <property type="taxonomic scope" value="Bacteria"/>
</dbReference>
<dbReference type="HOGENOM" id="CLU_016922_10_1_6"/>
<dbReference type="OrthoDB" id="9801052at2"/>
<dbReference type="UniPathway" id="UPA00185">
    <property type="reaction ID" value="UER00281"/>
</dbReference>
<dbReference type="Proteomes" id="UP000002514">
    <property type="component" value="Chromosome"/>
</dbReference>
<dbReference type="GO" id="GO:0042802">
    <property type="term" value="F:identical protein binding"/>
    <property type="evidence" value="ECO:0007669"/>
    <property type="project" value="TreeGrafter"/>
</dbReference>
<dbReference type="GO" id="GO:0030170">
    <property type="term" value="F:pyridoxal phosphate binding"/>
    <property type="evidence" value="ECO:0007669"/>
    <property type="project" value="UniProtKB-UniRule"/>
</dbReference>
<dbReference type="GO" id="GO:0043825">
    <property type="term" value="F:succinylornithine transaminase activity"/>
    <property type="evidence" value="ECO:0007669"/>
    <property type="project" value="UniProtKB-EC"/>
</dbReference>
<dbReference type="GO" id="GO:1901607">
    <property type="term" value="P:alpha-amino acid biosynthetic process"/>
    <property type="evidence" value="ECO:0007669"/>
    <property type="project" value="UniProtKB-ARBA"/>
</dbReference>
<dbReference type="GO" id="GO:0019544">
    <property type="term" value="P:arginine catabolic process to glutamate"/>
    <property type="evidence" value="ECO:0007669"/>
    <property type="project" value="UniProtKB-UniRule"/>
</dbReference>
<dbReference type="GO" id="GO:0019545">
    <property type="term" value="P:arginine catabolic process to succinate"/>
    <property type="evidence" value="ECO:0007669"/>
    <property type="project" value="UniProtKB-UniRule"/>
</dbReference>
<dbReference type="GO" id="GO:0006593">
    <property type="term" value="P:ornithine catabolic process"/>
    <property type="evidence" value="ECO:0007669"/>
    <property type="project" value="InterPro"/>
</dbReference>
<dbReference type="CDD" id="cd00610">
    <property type="entry name" value="OAT_like"/>
    <property type="match status" value="1"/>
</dbReference>
<dbReference type="FunFam" id="3.40.640.10:FF:000004">
    <property type="entry name" value="Acetylornithine aminotransferase"/>
    <property type="match status" value="1"/>
</dbReference>
<dbReference type="Gene3D" id="3.90.1150.10">
    <property type="entry name" value="Aspartate Aminotransferase, domain 1"/>
    <property type="match status" value="1"/>
</dbReference>
<dbReference type="Gene3D" id="3.40.640.10">
    <property type="entry name" value="Type I PLP-dependent aspartate aminotransferase-like (Major domain)"/>
    <property type="match status" value="1"/>
</dbReference>
<dbReference type="HAMAP" id="MF_01107">
    <property type="entry name" value="ArgD_aminotrans_3"/>
    <property type="match status" value="1"/>
</dbReference>
<dbReference type="HAMAP" id="MF_01173">
    <property type="entry name" value="AstC_aminotrans_3"/>
    <property type="match status" value="1"/>
</dbReference>
<dbReference type="InterPro" id="IPR017652">
    <property type="entry name" value="Ac/SucOrn_transaminase_bac"/>
</dbReference>
<dbReference type="InterPro" id="IPR004636">
    <property type="entry name" value="AcOrn/SuccOrn_fam"/>
</dbReference>
<dbReference type="InterPro" id="IPR005814">
    <property type="entry name" value="Aminotrans_3"/>
</dbReference>
<dbReference type="InterPro" id="IPR049704">
    <property type="entry name" value="Aminotrans_3_PPA_site"/>
</dbReference>
<dbReference type="InterPro" id="IPR050103">
    <property type="entry name" value="Class-III_PLP-dep_AT"/>
</dbReference>
<dbReference type="InterPro" id="IPR015424">
    <property type="entry name" value="PyrdxlP-dep_Trfase"/>
</dbReference>
<dbReference type="InterPro" id="IPR015421">
    <property type="entry name" value="PyrdxlP-dep_Trfase_major"/>
</dbReference>
<dbReference type="InterPro" id="IPR015422">
    <property type="entry name" value="PyrdxlP-dep_Trfase_small"/>
</dbReference>
<dbReference type="InterPro" id="IPR026330">
    <property type="entry name" value="SOAT"/>
</dbReference>
<dbReference type="NCBIfam" id="TIGR03246">
    <property type="entry name" value="arg_catab_astC"/>
    <property type="match status" value="1"/>
</dbReference>
<dbReference type="NCBIfam" id="TIGR00707">
    <property type="entry name" value="argD"/>
    <property type="match status" value="1"/>
</dbReference>
<dbReference type="NCBIfam" id="NF002325">
    <property type="entry name" value="PRK01278.1"/>
    <property type="match status" value="1"/>
</dbReference>
<dbReference type="NCBIfam" id="NF003468">
    <property type="entry name" value="PRK05093.1"/>
    <property type="match status" value="1"/>
</dbReference>
<dbReference type="NCBIfam" id="NF009047">
    <property type="entry name" value="PRK12381.1"/>
    <property type="match status" value="1"/>
</dbReference>
<dbReference type="PANTHER" id="PTHR11986">
    <property type="entry name" value="AMINOTRANSFERASE CLASS III"/>
    <property type="match status" value="1"/>
</dbReference>
<dbReference type="PANTHER" id="PTHR11986:SF113">
    <property type="entry name" value="SUCCINYLORNITHINE TRANSAMINASE"/>
    <property type="match status" value="1"/>
</dbReference>
<dbReference type="Pfam" id="PF00202">
    <property type="entry name" value="Aminotran_3"/>
    <property type="match status" value="1"/>
</dbReference>
<dbReference type="PIRSF" id="PIRSF000521">
    <property type="entry name" value="Transaminase_4ab_Lys_Orn"/>
    <property type="match status" value="1"/>
</dbReference>
<dbReference type="SUPFAM" id="SSF53383">
    <property type="entry name" value="PLP-dependent transferases"/>
    <property type="match status" value="1"/>
</dbReference>
<dbReference type="PROSITE" id="PS00600">
    <property type="entry name" value="AA_TRANSFER_CLASS_3"/>
    <property type="match status" value="1"/>
</dbReference>
<comment type="function">
    <text evidence="1">Catalyzes the transamination of N(2)-succinylornithine and alpha-ketoglutarate into N(2)-succinylglutamate semialdehyde and glutamate. Can also act as an acetylornithine aminotransferase.</text>
</comment>
<comment type="catalytic activity">
    <reaction evidence="1">
        <text>N(2)-succinyl-L-ornithine + 2-oxoglutarate = N-succinyl-L-glutamate 5-semialdehyde + L-glutamate</text>
        <dbReference type="Rhea" id="RHEA:16953"/>
        <dbReference type="ChEBI" id="CHEBI:16810"/>
        <dbReference type="ChEBI" id="CHEBI:29985"/>
        <dbReference type="ChEBI" id="CHEBI:58514"/>
        <dbReference type="ChEBI" id="CHEBI:58520"/>
        <dbReference type="EC" id="2.6.1.81"/>
    </reaction>
</comment>
<comment type="cofactor">
    <cofactor evidence="1">
        <name>pyridoxal 5'-phosphate</name>
        <dbReference type="ChEBI" id="CHEBI:597326"/>
    </cofactor>
</comment>
<comment type="pathway">
    <text evidence="1">Amino-acid degradation; L-arginine degradation via AST pathway; L-glutamate and succinate from L-arginine: step 3/5.</text>
</comment>
<comment type="similarity">
    <text evidence="1">Belongs to the class-III pyridoxal-phosphate-dependent aminotransferase family. AstC subfamily.</text>
</comment>
<sequence length="402" mass="44311">MLENIQRSWFEHYMVPCFSPAKFIPVRAKGSKVWDQDGKEYIDFAGGIAVNSLGHAHPELKDELIYQIDKIWHIGNGYTNEPVLKLAKRLVENTFADKAFFCNSGAEANEAALKLARKYAADKYGKNKNEIISFKDSFHGRTLFTVTVGGQPKYSQDYAPLPQEITHLPYNNLSAIREHISENTCAVIVEPIIGEGGVIPADPAFLQELRTLCDRFQALLIFDEIQTGVGRTGYLYAYQEYGVEPDILTSAKGLGGGFPIGAMLTKQHIAAVFQPGTHGTTFGGNPLATAVANKVLSIVNQAELLTGVLQRHDYFMDKLSKLNQRYQIFSCLRGKGLLLGAELDKAWQGKAKQLTNLAAEEGLIALIAGPDVLRFAPALNIEFADIDEGLVRLESAIMRFVG</sequence>
<accession>Q7N2G7</accession>
<protein>
    <recommendedName>
        <fullName evidence="1">Succinylornithine transaminase</fullName>
        <shortName>SOAT</shortName>
        <ecNumber evidence="1">2.6.1.81</ecNumber>
    </recommendedName>
    <alternativeName>
        <fullName>Carbon starvation protein C</fullName>
    </alternativeName>
    <alternativeName>
        <fullName evidence="1">Succinylornithine aminotransferase</fullName>
    </alternativeName>
</protein>
<gene>
    <name evidence="1" type="primary">astC</name>
    <name evidence="1" type="synonym">argM</name>
    <name type="ordered locus">plu3110</name>
</gene>
<organism>
    <name type="scientific">Photorhabdus laumondii subsp. laumondii (strain DSM 15139 / CIP 105565 / TT01)</name>
    <name type="common">Photorhabdus luminescens subsp. laumondii</name>
    <dbReference type="NCBI Taxonomy" id="243265"/>
    <lineage>
        <taxon>Bacteria</taxon>
        <taxon>Pseudomonadati</taxon>
        <taxon>Pseudomonadota</taxon>
        <taxon>Gammaproteobacteria</taxon>
        <taxon>Enterobacterales</taxon>
        <taxon>Morganellaceae</taxon>
        <taxon>Photorhabdus</taxon>
    </lineage>
</organism>
<evidence type="ECO:0000255" key="1">
    <source>
        <dbReference type="HAMAP-Rule" id="MF_01173"/>
    </source>
</evidence>
<keyword id="KW-0032">Aminotransferase</keyword>
<keyword id="KW-0056">Arginine metabolism</keyword>
<keyword id="KW-0663">Pyridoxal phosphate</keyword>
<keyword id="KW-1185">Reference proteome</keyword>
<keyword id="KW-0808">Transferase</keyword>
<reference key="1">
    <citation type="journal article" date="2003" name="Nat. Biotechnol.">
        <title>The genome sequence of the entomopathogenic bacterium Photorhabdus luminescens.</title>
        <authorList>
            <person name="Duchaud E."/>
            <person name="Rusniok C."/>
            <person name="Frangeul L."/>
            <person name="Buchrieser C."/>
            <person name="Givaudan A."/>
            <person name="Taourit S."/>
            <person name="Bocs S."/>
            <person name="Boursaux-Eude C."/>
            <person name="Chandler M."/>
            <person name="Charles J.-F."/>
            <person name="Dassa E."/>
            <person name="Derose R."/>
            <person name="Derzelle S."/>
            <person name="Freyssinet G."/>
            <person name="Gaudriault S."/>
            <person name="Medigue C."/>
            <person name="Lanois A."/>
            <person name="Powell K."/>
            <person name="Siguier P."/>
            <person name="Vincent R."/>
            <person name="Wingate V."/>
            <person name="Zouine M."/>
            <person name="Glaser P."/>
            <person name="Boemare N."/>
            <person name="Danchin A."/>
            <person name="Kunst F."/>
        </authorList>
    </citation>
    <scope>NUCLEOTIDE SEQUENCE [LARGE SCALE GENOMIC DNA]</scope>
    <source>
        <strain>DSM 15139 / CIP 105565 / TT01</strain>
    </source>
</reference>
<proteinExistence type="inferred from homology"/>
<name>ASTC_PHOLL</name>
<feature type="chain" id="PRO_0000120355" description="Succinylornithine transaminase">
    <location>
        <begin position="1"/>
        <end position="402"/>
    </location>
</feature>
<feature type="modified residue" description="N6-(pyridoxal phosphate)lysine" evidence="1">
    <location>
        <position position="252"/>
    </location>
</feature>